<comment type="function">
    <text evidence="1">Protease with a carboxypeptidase B-like function involved in the C-terminal processing of the lysine and arginine residues from protein precursors. Promotes cell fusion and is involved in the programmed cell death (By similarity).</text>
</comment>
<comment type="catalytic activity">
    <reaction>
        <text>Preferential release of a C-terminal arginine or lysine residue.</text>
        <dbReference type="EC" id="3.4.16.6"/>
    </reaction>
</comment>
<comment type="subcellular location">
    <subcellularLocation>
        <location evidence="1">Golgi apparatus</location>
        <location evidence="1">trans-Golgi network membrane</location>
        <topology evidence="1">Single-pass type I membrane protein</topology>
    </subcellularLocation>
</comment>
<comment type="similarity">
    <text evidence="4">Belongs to the peptidase S10 family.</text>
</comment>
<feature type="signal peptide" evidence="2">
    <location>
        <begin position="1"/>
        <end position="24"/>
    </location>
</feature>
<feature type="chain" id="PRO_0000411925" description="Pheromone-processing carboxypeptidase KEX1">
    <location>
        <begin position="25"/>
        <end position="634"/>
    </location>
</feature>
<feature type="topological domain" description="Lumenal" evidence="2">
    <location>
        <begin position="25"/>
        <end position="512"/>
    </location>
</feature>
<feature type="transmembrane region" description="Helical" evidence="2">
    <location>
        <begin position="513"/>
        <end position="533"/>
    </location>
</feature>
<feature type="topological domain" description="Cytoplasmic" evidence="2">
    <location>
        <begin position="534"/>
        <end position="634"/>
    </location>
</feature>
<feature type="region of interest" description="Disordered" evidence="3">
    <location>
        <begin position="468"/>
        <end position="498"/>
    </location>
</feature>
<feature type="region of interest" description="Disordered" evidence="3">
    <location>
        <begin position="542"/>
        <end position="634"/>
    </location>
</feature>
<feature type="active site" evidence="1">
    <location>
        <position position="177"/>
    </location>
</feature>
<feature type="active site" evidence="1">
    <location>
        <position position="378"/>
    </location>
</feature>
<feature type="active site" evidence="1">
    <location>
        <position position="440"/>
    </location>
</feature>
<feature type="glycosylation site" description="N-linked (GlcNAc...) asparagine" evidence="2">
    <location>
        <position position="429"/>
    </location>
</feature>
<feature type="glycosylation site" description="N-linked (GlcNAc...) asparagine" evidence="2">
    <location>
        <position position="490"/>
    </location>
</feature>
<evidence type="ECO:0000250" key="1"/>
<evidence type="ECO:0000255" key="2"/>
<evidence type="ECO:0000256" key="3">
    <source>
        <dbReference type="SAM" id="MobiDB-lite"/>
    </source>
</evidence>
<evidence type="ECO:0000305" key="4"/>
<name>KEX1_PYRO7</name>
<accession>A4RE47</accession>
<accession>G4NEK4</accession>
<reference key="1">
    <citation type="journal article" date="2005" name="Nature">
        <title>The genome sequence of the rice blast fungus Magnaporthe grisea.</title>
        <authorList>
            <person name="Dean R.A."/>
            <person name="Talbot N.J."/>
            <person name="Ebbole D.J."/>
            <person name="Farman M.L."/>
            <person name="Mitchell T.K."/>
            <person name="Orbach M.J."/>
            <person name="Thon M.R."/>
            <person name="Kulkarni R."/>
            <person name="Xu J.-R."/>
            <person name="Pan H."/>
            <person name="Read N.D."/>
            <person name="Lee Y.-H."/>
            <person name="Carbone I."/>
            <person name="Brown D."/>
            <person name="Oh Y.Y."/>
            <person name="Donofrio N."/>
            <person name="Jeong J.S."/>
            <person name="Soanes D.M."/>
            <person name="Djonovic S."/>
            <person name="Kolomiets E."/>
            <person name="Rehmeyer C."/>
            <person name="Li W."/>
            <person name="Harding M."/>
            <person name="Kim S."/>
            <person name="Lebrun M.-H."/>
            <person name="Bohnert H."/>
            <person name="Coughlan S."/>
            <person name="Butler J."/>
            <person name="Calvo S.E."/>
            <person name="Ma L.-J."/>
            <person name="Nicol R."/>
            <person name="Purcell S."/>
            <person name="Nusbaum C."/>
            <person name="Galagan J.E."/>
            <person name="Birren B.W."/>
        </authorList>
    </citation>
    <scope>NUCLEOTIDE SEQUENCE [LARGE SCALE GENOMIC DNA]</scope>
    <source>
        <strain>70-15 / ATCC MYA-4617 / FGSC 8958</strain>
    </source>
</reference>
<dbReference type="EC" id="3.4.16.6"/>
<dbReference type="EMBL" id="CM001235">
    <property type="protein sequence ID" value="EHA48634.1"/>
    <property type="molecule type" value="Genomic_DNA"/>
</dbReference>
<dbReference type="RefSeq" id="XP_003718218.1">
    <property type="nucleotide sequence ID" value="XM_003718170.1"/>
</dbReference>
<dbReference type="SMR" id="A4RE47"/>
<dbReference type="FunCoup" id="A4RE47">
    <property type="interactions" value="111"/>
</dbReference>
<dbReference type="STRING" id="242507.A4RE47"/>
<dbReference type="ESTHER" id="mago7-kex1">
    <property type="family name" value="Carboxypeptidase_S10"/>
</dbReference>
<dbReference type="MEROPS" id="S10.007"/>
<dbReference type="GlyCosmos" id="A4RE47">
    <property type="glycosylation" value="2 sites, No reported glycans"/>
</dbReference>
<dbReference type="EnsemblFungi" id="MGG_00775T0">
    <property type="protein sequence ID" value="MGG_00775T0"/>
    <property type="gene ID" value="MGG_00775"/>
</dbReference>
<dbReference type="GeneID" id="2675037"/>
<dbReference type="KEGG" id="mgr:MGG_00775"/>
<dbReference type="VEuPathDB" id="FungiDB:MGG_00775"/>
<dbReference type="eggNOG" id="KOG1282">
    <property type="taxonomic scope" value="Eukaryota"/>
</dbReference>
<dbReference type="HOGENOM" id="CLU_008523_11_0_1"/>
<dbReference type="InParanoid" id="A4RE47"/>
<dbReference type="OMA" id="EMADQFV"/>
<dbReference type="OrthoDB" id="443318at2759"/>
<dbReference type="Proteomes" id="UP000009058">
    <property type="component" value="Chromosome 5"/>
</dbReference>
<dbReference type="GO" id="GO:0016020">
    <property type="term" value="C:membrane"/>
    <property type="evidence" value="ECO:0007669"/>
    <property type="project" value="UniProtKB-KW"/>
</dbReference>
<dbReference type="GO" id="GO:0005802">
    <property type="term" value="C:trans-Golgi network"/>
    <property type="evidence" value="ECO:0007669"/>
    <property type="project" value="TreeGrafter"/>
</dbReference>
<dbReference type="GO" id="GO:0004185">
    <property type="term" value="F:serine-type carboxypeptidase activity"/>
    <property type="evidence" value="ECO:0007669"/>
    <property type="project" value="UniProtKB-EC"/>
</dbReference>
<dbReference type="GO" id="GO:0006915">
    <property type="term" value="P:apoptotic process"/>
    <property type="evidence" value="ECO:0007669"/>
    <property type="project" value="UniProtKB-KW"/>
</dbReference>
<dbReference type="GO" id="GO:0006508">
    <property type="term" value="P:proteolysis"/>
    <property type="evidence" value="ECO:0007669"/>
    <property type="project" value="UniProtKB-KW"/>
</dbReference>
<dbReference type="FunFam" id="3.40.50.1820:FF:000121">
    <property type="entry name" value="Carboxypeptidase D"/>
    <property type="match status" value="1"/>
</dbReference>
<dbReference type="Gene3D" id="3.40.50.1820">
    <property type="entry name" value="alpha/beta hydrolase"/>
    <property type="match status" value="1"/>
</dbReference>
<dbReference type="InterPro" id="IPR029058">
    <property type="entry name" value="AB_hydrolase_fold"/>
</dbReference>
<dbReference type="InterPro" id="IPR001563">
    <property type="entry name" value="Peptidase_S10"/>
</dbReference>
<dbReference type="PANTHER" id="PTHR11802:SF190">
    <property type="entry name" value="PHEROMONE-PROCESSING CARBOXYPEPTIDASE KEX1"/>
    <property type="match status" value="1"/>
</dbReference>
<dbReference type="PANTHER" id="PTHR11802">
    <property type="entry name" value="SERINE PROTEASE FAMILY S10 SERINE CARBOXYPEPTIDASE"/>
    <property type="match status" value="1"/>
</dbReference>
<dbReference type="Pfam" id="PF00450">
    <property type="entry name" value="Peptidase_S10"/>
    <property type="match status" value="1"/>
</dbReference>
<dbReference type="PRINTS" id="PR00724">
    <property type="entry name" value="CRBOXYPTASEC"/>
</dbReference>
<dbReference type="SUPFAM" id="SSF53474">
    <property type="entry name" value="alpha/beta-Hydrolases"/>
    <property type="match status" value="1"/>
</dbReference>
<protein>
    <recommendedName>
        <fullName>Pheromone-processing carboxypeptidase KEX1</fullName>
        <ecNumber>3.4.16.6</ecNumber>
    </recommendedName>
    <alternativeName>
        <fullName>Carboxypeptidase D</fullName>
    </alternativeName>
</protein>
<proteinExistence type="inferred from homology"/>
<keyword id="KW-0053">Apoptosis</keyword>
<keyword id="KW-0121">Carboxypeptidase</keyword>
<keyword id="KW-0325">Glycoprotein</keyword>
<keyword id="KW-0333">Golgi apparatus</keyword>
<keyword id="KW-0378">Hydrolase</keyword>
<keyword id="KW-0472">Membrane</keyword>
<keyword id="KW-0645">Protease</keyword>
<keyword id="KW-1185">Reference proteome</keyword>
<keyword id="KW-0732">Signal</keyword>
<keyword id="KW-0812">Transmembrane</keyword>
<keyword id="KW-1133">Transmembrane helix</keyword>
<gene>
    <name type="primary">KEX1</name>
    <name type="ORF">MGG_00775</name>
</gene>
<organism>
    <name type="scientific">Pyricularia oryzae (strain 70-15 / ATCC MYA-4617 / FGSC 8958)</name>
    <name type="common">Rice blast fungus</name>
    <name type="synonym">Magnaporthe oryzae</name>
    <dbReference type="NCBI Taxonomy" id="242507"/>
    <lineage>
        <taxon>Eukaryota</taxon>
        <taxon>Fungi</taxon>
        <taxon>Dikarya</taxon>
        <taxon>Ascomycota</taxon>
        <taxon>Pezizomycotina</taxon>
        <taxon>Sordariomycetes</taxon>
        <taxon>Sordariomycetidae</taxon>
        <taxon>Magnaporthales</taxon>
        <taxon>Pyriculariaceae</taxon>
        <taxon>Pyricularia</taxon>
    </lineage>
</organism>
<sequence length="634" mass="70579">MKLAMRRASTFALLALSWSAAVSAASSAGDYFVRSLPGAPPGPLVKMHAGHIEVSPEKNGNLFFWHFQNKHIANRQRTVIWLNGGPGCSSEDGALMEVGPYRLKDDHTLVPNEGSWHEFANLMFVDNPVGTGFSYVNTDSYVTELDEMADQFVIFLEKFFELFPEYSQDDIYIAGESFAGQHIPYIAKHILDRNKNSMTKIKWNLKGLLIGNGWIAPNEQYRAYLDFSYSKGLLDKNSETAKTLEAQHKDCAKEWEDNGPKVDVAKCESVLQTLLKLSSKVEADGKRHCVNMYDVRLRDTYPSCGMNWPPDLVNVTPYLRRKDVVEALHVNPNKATGWTECTGAVGQSFKAQKSKPSIDLLPKILEEVPILLFSGAEDLICNHIGTEAFIGKMTWNGGKGFEVTPGTWAPRRDWTFEGKDAGFWQEARNLTYVLFKDSSHMVPFDFPRRSRDMLDRFMGVDISSIGGNPTDSRLDGEKLPETTVGGAAGNSTSKQEEEKKKLDEAKWYAYRKSGEVVLVIVAVAAVAWGWYVWRDRRRRRGYQGIFGGSPSESTTRLPGLGSRISSTPSGLEGFRSKRQNGRDVEAGDFDESELDDLHTQTPTDARYSVGADSDDEEDASGSRKEGGPSGGRGR</sequence>